<gene>
    <name evidence="1" type="primary">matK</name>
</gene>
<accession>B0Z5A9</accession>
<protein>
    <recommendedName>
        <fullName evidence="1">Maturase K</fullName>
    </recommendedName>
    <alternativeName>
        <fullName evidence="1">Intron maturase</fullName>
    </alternativeName>
</protein>
<comment type="function">
    <text evidence="1">Usually encoded in the trnK tRNA gene intron. Probably assists in splicing its own and other chloroplast group II introns.</text>
</comment>
<comment type="subcellular location">
    <subcellularLocation>
        <location>Plastid</location>
        <location>Chloroplast</location>
    </subcellularLocation>
</comment>
<comment type="similarity">
    <text evidence="1">Belongs to the intron maturase 2 family. MatK subfamily.</text>
</comment>
<name>MATK_OENPA</name>
<geneLocation type="chloroplast"/>
<reference key="1">
    <citation type="journal article" date="2008" name="Nucleic Acids Res.">
        <title>The complete nucleotide sequences of the five genetically distinct plastid genomes of Oenothera, subsection Oenothera: I. Sequence evaluation and plastome evolution.</title>
        <authorList>
            <person name="Greiner S."/>
            <person name="Wang X."/>
            <person name="Rauwolf U."/>
            <person name="Silber M.V."/>
            <person name="Mayer K."/>
            <person name="Meurer J."/>
            <person name="Haberer G."/>
            <person name="Herrmann R.G."/>
        </authorList>
    </citation>
    <scope>NUCLEOTIDE SEQUENCE [LARGE SCALE GENOMIC DNA]</scope>
    <source>
        <strain>cv. Atrovirens</strain>
    </source>
</reference>
<proteinExistence type="inferred from homology"/>
<dbReference type="EMBL" id="EU262891">
    <property type="protein sequence ID" value="ABX10102.1"/>
    <property type="molecule type" value="Genomic_DNA"/>
</dbReference>
<dbReference type="RefSeq" id="YP_001687432.1">
    <property type="nucleotide sequence ID" value="NC_010362.1"/>
</dbReference>
<dbReference type="GeneID" id="5955392"/>
<dbReference type="GO" id="GO:0009507">
    <property type="term" value="C:chloroplast"/>
    <property type="evidence" value="ECO:0007669"/>
    <property type="project" value="UniProtKB-SubCell"/>
</dbReference>
<dbReference type="GO" id="GO:0003723">
    <property type="term" value="F:RNA binding"/>
    <property type="evidence" value="ECO:0007669"/>
    <property type="project" value="UniProtKB-KW"/>
</dbReference>
<dbReference type="GO" id="GO:0006397">
    <property type="term" value="P:mRNA processing"/>
    <property type="evidence" value="ECO:0007669"/>
    <property type="project" value="UniProtKB-KW"/>
</dbReference>
<dbReference type="GO" id="GO:0008380">
    <property type="term" value="P:RNA splicing"/>
    <property type="evidence" value="ECO:0007669"/>
    <property type="project" value="UniProtKB-UniRule"/>
</dbReference>
<dbReference type="GO" id="GO:0008033">
    <property type="term" value="P:tRNA processing"/>
    <property type="evidence" value="ECO:0007669"/>
    <property type="project" value="UniProtKB-KW"/>
</dbReference>
<dbReference type="HAMAP" id="MF_01390">
    <property type="entry name" value="MatK"/>
    <property type="match status" value="1"/>
</dbReference>
<dbReference type="InterPro" id="IPR024937">
    <property type="entry name" value="Domain_X"/>
</dbReference>
<dbReference type="InterPro" id="IPR002866">
    <property type="entry name" value="Maturase_MatK"/>
</dbReference>
<dbReference type="InterPro" id="IPR024942">
    <property type="entry name" value="Maturase_MatK_N"/>
</dbReference>
<dbReference type="PANTHER" id="PTHR34811">
    <property type="entry name" value="MATURASE K"/>
    <property type="match status" value="1"/>
</dbReference>
<dbReference type="PANTHER" id="PTHR34811:SF1">
    <property type="entry name" value="MATURASE K"/>
    <property type="match status" value="1"/>
</dbReference>
<dbReference type="Pfam" id="PF01348">
    <property type="entry name" value="Intron_maturas2"/>
    <property type="match status" value="1"/>
</dbReference>
<dbReference type="Pfam" id="PF01824">
    <property type="entry name" value="MatK_N"/>
    <property type="match status" value="1"/>
</dbReference>
<sequence length="512" mass="59963">MEEFPGYFELDRSRQHDFLYPLIFRESIYALAHDHGLNRNRSTLFENEVDYDKKYSLIIVKRLITRMYQRNHLIISANGSVQNPFLGHNKNLYSKILSEGFAVIVEIPFSLRVLSSFERKEKDIAKSPTLRSIHSIFPFLEDQFSHLDYLSHVLIPYPIHLEIAVQTLRYWVKDASSLHLLRIFLHEYWNSFSTPKKHITLFLKGNSRFFLFLYNSYVCEYESIFLFIRNQSSHFQSTSSGVFFERILFYVKIDHLVEVFVGTDFLDIRSFFKDPNMHYVRYQGKSILASKDTPLLMNKWKYYLVNLWQYHFSVWSQPGRININQLGKYSLDFLGYFSNVQLKSSVVRNQTLENSFLINNAMKKLETTVPILPLIGSLSRAKFCNALGHPISKPTRTDSSDSDIIDRFVRICRNLSHYHSGSSKKKSLYRIKYILRLSCVKTLARKHKSSVRAFLKRLGSELGDEFLTEEGVVLAVIFPKASGRLYRGRIWYLDIPCINDWVGDAEGSIFTK</sequence>
<keyword id="KW-0150">Chloroplast</keyword>
<keyword id="KW-0507">mRNA processing</keyword>
<keyword id="KW-0934">Plastid</keyword>
<keyword id="KW-0694">RNA-binding</keyword>
<keyword id="KW-0819">tRNA processing</keyword>
<organism>
    <name type="scientific">Oenothera parviflora</name>
    <name type="common">Small-flowered evening primrose</name>
    <name type="synonym">Oenothera cruciata</name>
    <dbReference type="NCBI Taxonomy" id="482429"/>
    <lineage>
        <taxon>Eukaryota</taxon>
        <taxon>Viridiplantae</taxon>
        <taxon>Streptophyta</taxon>
        <taxon>Embryophyta</taxon>
        <taxon>Tracheophyta</taxon>
        <taxon>Spermatophyta</taxon>
        <taxon>Magnoliopsida</taxon>
        <taxon>eudicotyledons</taxon>
        <taxon>Gunneridae</taxon>
        <taxon>Pentapetalae</taxon>
        <taxon>rosids</taxon>
        <taxon>malvids</taxon>
        <taxon>Myrtales</taxon>
        <taxon>Onagraceae</taxon>
        <taxon>Onagroideae</taxon>
        <taxon>Onagreae</taxon>
        <taxon>Oenothera</taxon>
    </lineage>
</organism>
<feature type="chain" id="PRO_0000355954" description="Maturase K">
    <location>
        <begin position="1"/>
        <end position="512"/>
    </location>
</feature>
<evidence type="ECO:0000255" key="1">
    <source>
        <dbReference type="HAMAP-Rule" id="MF_01390"/>
    </source>
</evidence>